<name>RBL_VALMU</name>
<feature type="propeptide" id="PRO_0000031433" evidence="1">
    <location>
        <begin position="1"/>
        <end position="2"/>
    </location>
</feature>
<feature type="chain" id="PRO_0000031434" description="Ribulose bisphosphate carboxylase large chain">
    <location>
        <begin position="3"/>
        <end position="453" status="greater than"/>
    </location>
</feature>
<feature type="active site" description="Proton acceptor" evidence="1">
    <location>
        <position position="175"/>
    </location>
</feature>
<feature type="active site" description="Proton acceptor" evidence="1">
    <location>
        <position position="294"/>
    </location>
</feature>
<feature type="binding site" description="in homodimeric partner" evidence="1">
    <location>
        <position position="123"/>
    </location>
    <ligand>
        <name>substrate</name>
    </ligand>
</feature>
<feature type="binding site" evidence="1">
    <location>
        <position position="173"/>
    </location>
    <ligand>
        <name>substrate</name>
    </ligand>
</feature>
<feature type="binding site" evidence="1">
    <location>
        <position position="177"/>
    </location>
    <ligand>
        <name>substrate</name>
    </ligand>
</feature>
<feature type="binding site" description="via carbamate group" evidence="1">
    <location>
        <position position="201"/>
    </location>
    <ligand>
        <name>Mg(2+)</name>
        <dbReference type="ChEBI" id="CHEBI:18420"/>
    </ligand>
</feature>
<feature type="binding site" evidence="1">
    <location>
        <position position="203"/>
    </location>
    <ligand>
        <name>Mg(2+)</name>
        <dbReference type="ChEBI" id="CHEBI:18420"/>
    </ligand>
</feature>
<feature type="binding site" evidence="1">
    <location>
        <position position="204"/>
    </location>
    <ligand>
        <name>Mg(2+)</name>
        <dbReference type="ChEBI" id="CHEBI:18420"/>
    </ligand>
</feature>
<feature type="binding site" evidence="1">
    <location>
        <position position="295"/>
    </location>
    <ligand>
        <name>substrate</name>
    </ligand>
</feature>
<feature type="binding site" evidence="1">
    <location>
        <position position="327"/>
    </location>
    <ligand>
        <name>substrate</name>
    </ligand>
</feature>
<feature type="binding site" evidence="1">
    <location>
        <position position="379"/>
    </location>
    <ligand>
        <name>substrate</name>
    </ligand>
</feature>
<feature type="site" description="Transition state stabilizer" evidence="1">
    <location>
        <position position="334"/>
    </location>
</feature>
<feature type="modified residue" description="N-acetylproline" evidence="1">
    <location>
        <position position="3"/>
    </location>
</feature>
<feature type="modified residue" description="N6,N6,N6-trimethyllysine" evidence="1">
    <location>
        <position position="14"/>
    </location>
</feature>
<feature type="modified residue" description="N6-carboxylysine" evidence="1">
    <location>
        <position position="201"/>
    </location>
</feature>
<feature type="disulfide bond" description="Interchain; in linked form" evidence="1">
    <location>
        <position position="247"/>
    </location>
</feature>
<feature type="non-terminal residue">
    <location>
        <position position="453"/>
    </location>
</feature>
<evidence type="ECO:0000255" key="1">
    <source>
        <dbReference type="HAMAP-Rule" id="MF_01338"/>
    </source>
</evidence>
<proteinExistence type="inferred from homology"/>
<reference key="1">
    <citation type="journal article" date="1995" name="J. Mol. Evol.">
        <title>Comparison of the evolution of ribulose-1, 5-biphosphate carboxylase (rbcL) and atpB-rbcL noncoding spacer sequences in a recent plant group, the tribe Rubieae (Rubiaceae).</title>
        <authorList>
            <person name="Manen J.F."/>
            <person name="Natali A."/>
        </authorList>
    </citation>
    <scope>NUCLEOTIDE SEQUENCE [GENOMIC DNA]</scope>
</reference>
<accession>Q33274</accession>
<dbReference type="EC" id="4.1.1.39" evidence="1"/>
<dbReference type="EMBL" id="X81107">
    <property type="protein sequence ID" value="CAA57013.1"/>
    <property type="molecule type" value="Genomic_DNA"/>
</dbReference>
<dbReference type="PIR" id="S47238">
    <property type="entry name" value="S47238"/>
</dbReference>
<dbReference type="SMR" id="Q33274"/>
<dbReference type="GO" id="GO:0009507">
    <property type="term" value="C:chloroplast"/>
    <property type="evidence" value="ECO:0007669"/>
    <property type="project" value="UniProtKB-SubCell"/>
</dbReference>
<dbReference type="GO" id="GO:0000287">
    <property type="term" value="F:magnesium ion binding"/>
    <property type="evidence" value="ECO:0007669"/>
    <property type="project" value="InterPro"/>
</dbReference>
<dbReference type="GO" id="GO:0004497">
    <property type="term" value="F:monooxygenase activity"/>
    <property type="evidence" value="ECO:0007669"/>
    <property type="project" value="UniProtKB-KW"/>
</dbReference>
<dbReference type="GO" id="GO:0016984">
    <property type="term" value="F:ribulose-bisphosphate carboxylase activity"/>
    <property type="evidence" value="ECO:0007669"/>
    <property type="project" value="UniProtKB-EC"/>
</dbReference>
<dbReference type="GO" id="GO:0009853">
    <property type="term" value="P:photorespiration"/>
    <property type="evidence" value="ECO:0007669"/>
    <property type="project" value="UniProtKB-KW"/>
</dbReference>
<dbReference type="GO" id="GO:0019253">
    <property type="term" value="P:reductive pentose-phosphate cycle"/>
    <property type="evidence" value="ECO:0007669"/>
    <property type="project" value="UniProtKB-KW"/>
</dbReference>
<dbReference type="CDD" id="cd08212">
    <property type="entry name" value="RuBisCO_large_I"/>
    <property type="match status" value="1"/>
</dbReference>
<dbReference type="FunFam" id="3.20.20.110:FF:000003">
    <property type="entry name" value="Ribulose bisphosphate carboxylase large chain"/>
    <property type="match status" value="1"/>
</dbReference>
<dbReference type="FunFam" id="3.30.70.150:FF:000001">
    <property type="entry name" value="Ribulose bisphosphate carboxylase large chain"/>
    <property type="match status" value="1"/>
</dbReference>
<dbReference type="Gene3D" id="3.20.20.110">
    <property type="entry name" value="Ribulose bisphosphate carboxylase, large subunit, C-terminal domain"/>
    <property type="match status" value="1"/>
</dbReference>
<dbReference type="Gene3D" id="3.30.70.150">
    <property type="entry name" value="RuBisCO large subunit, N-terminal domain"/>
    <property type="match status" value="1"/>
</dbReference>
<dbReference type="HAMAP" id="MF_01338">
    <property type="entry name" value="RuBisCO_L_type1"/>
    <property type="match status" value="1"/>
</dbReference>
<dbReference type="InterPro" id="IPR033966">
    <property type="entry name" value="RuBisCO"/>
</dbReference>
<dbReference type="InterPro" id="IPR020878">
    <property type="entry name" value="RuBisCo_large_chain_AS"/>
</dbReference>
<dbReference type="InterPro" id="IPR000685">
    <property type="entry name" value="RuBisCO_lsu_C"/>
</dbReference>
<dbReference type="InterPro" id="IPR036376">
    <property type="entry name" value="RuBisCO_lsu_C_sf"/>
</dbReference>
<dbReference type="InterPro" id="IPR017443">
    <property type="entry name" value="RuBisCO_lsu_fd_N"/>
</dbReference>
<dbReference type="InterPro" id="IPR036422">
    <property type="entry name" value="RuBisCO_lsu_N_sf"/>
</dbReference>
<dbReference type="InterPro" id="IPR020888">
    <property type="entry name" value="RuBisCO_lsuI"/>
</dbReference>
<dbReference type="NCBIfam" id="NF003252">
    <property type="entry name" value="PRK04208.1"/>
    <property type="match status" value="1"/>
</dbReference>
<dbReference type="PANTHER" id="PTHR42704">
    <property type="entry name" value="RIBULOSE BISPHOSPHATE CARBOXYLASE"/>
    <property type="match status" value="1"/>
</dbReference>
<dbReference type="PANTHER" id="PTHR42704:SF15">
    <property type="entry name" value="RIBULOSE BISPHOSPHATE CARBOXYLASE LARGE CHAIN"/>
    <property type="match status" value="1"/>
</dbReference>
<dbReference type="Pfam" id="PF00016">
    <property type="entry name" value="RuBisCO_large"/>
    <property type="match status" value="1"/>
</dbReference>
<dbReference type="Pfam" id="PF02788">
    <property type="entry name" value="RuBisCO_large_N"/>
    <property type="match status" value="1"/>
</dbReference>
<dbReference type="SFLD" id="SFLDG01052">
    <property type="entry name" value="RuBisCO"/>
    <property type="match status" value="1"/>
</dbReference>
<dbReference type="SFLD" id="SFLDS00014">
    <property type="entry name" value="RuBisCO"/>
    <property type="match status" value="1"/>
</dbReference>
<dbReference type="SFLD" id="SFLDG00301">
    <property type="entry name" value="RuBisCO-like_proteins"/>
    <property type="match status" value="1"/>
</dbReference>
<dbReference type="SUPFAM" id="SSF51649">
    <property type="entry name" value="RuBisCo, C-terminal domain"/>
    <property type="match status" value="1"/>
</dbReference>
<dbReference type="SUPFAM" id="SSF54966">
    <property type="entry name" value="RuBisCO, large subunit, small (N-terminal) domain"/>
    <property type="match status" value="1"/>
</dbReference>
<dbReference type="PROSITE" id="PS00157">
    <property type="entry name" value="RUBISCO_LARGE"/>
    <property type="match status" value="1"/>
</dbReference>
<comment type="function">
    <text evidence="1">RuBisCO catalyzes two reactions: the carboxylation of D-ribulose 1,5-bisphosphate, the primary event in carbon dioxide fixation, as well as the oxidative fragmentation of the pentose substrate in the photorespiration process. Both reactions occur simultaneously and in competition at the same active site.</text>
</comment>
<comment type="catalytic activity">
    <reaction evidence="1">
        <text>2 (2R)-3-phosphoglycerate + 2 H(+) = D-ribulose 1,5-bisphosphate + CO2 + H2O</text>
        <dbReference type="Rhea" id="RHEA:23124"/>
        <dbReference type="ChEBI" id="CHEBI:15377"/>
        <dbReference type="ChEBI" id="CHEBI:15378"/>
        <dbReference type="ChEBI" id="CHEBI:16526"/>
        <dbReference type="ChEBI" id="CHEBI:57870"/>
        <dbReference type="ChEBI" id="CHEBI:58272"/>
        <dbReference type="EC" id="4.1.1.39"/>
    </reaction>
</comment>
<comment type="catalytic activity">
    <reaction evidence="1">
        <text>D-ribulose 1,5-bisphosphate + O2 = 2-phosphoglycolate + (2R)-3-phosphoglycerate + 2 H(+)</text>
        <dbReference type="Rhea" id="RHEA:36631"/>
        <dbReference type="ChEBI" id="CHEBI:15378"/>
        <dbReference type="ChEBI" id="CHEBI:15379"/>
        <dbReference type="ChEBI" id="CHEBI:57870"/>
        <dbReference type="ChEBI" id="CHEBI:58033"/>
        <dbReference type="ChEBI" id="CHEBI:58272"/>
    </reaction>
</comment>
<comment type="cofactor">
    <cofactor evidence="1">
        <name>Mg(2+)</name>
        <dbReference type="ChEBI" id="CHEBI:18420"/>
    </cofactor>
    <text evidence="1">Binds 1 Mg(2+) ion per subunit.</text>
</comment>
<comment type="subunit">
    <text evidence="1">Heterohexadecamer of 8 large chains and 8 small chains; disulfide-linked. The disulfide link is formed within the large subunit homodimers.</text>
</comment>
<comment type="subcellular location">
    <subcellularLocation>
        <location>Plastid</location>
        <location>Chloroplast</location>
    </subcellularLocation>
</comment>
<comment type="PTM">
    <text evidence="1">The disulfide bond which can form in the large chain dimeric partners within the hexadecamer appears to be associated with oxidative stress and protein turnover.</text>
</comment>
<comment type="miscellaneous">
    <text evidence="1">The basic functional RuBisCO is composed of a large chain homodimer in a 'head-to-tail' conformation. In form I RuBisCO this homodimer is arranged in a barrel-like tetramer with the small subunits forming a tetrameric 'cap' on each end of the 'barrel'.</text>
</comment>
<comment type="similarity">
    <text evidence="1">Belongs to the RuBisCO large chain family. Type I subfamily.</text>
</comment>
<geneLocation type="chloroplast"/>
<keyword id="KW-0007">Acetylation</keyword>
<keyword id="KW-0113">Calvin cycle</keyword>
<keyword id="KW-0120">Carbon dioxide fixation</keyword>
<keyword id="KW-0150">Chloroplast</keyword>
<keyword id="KW-1015">Disulfide bond</keyword>
<keyword id="KW-0456">Lyase</keyword>
<keyword id="KW-0460">Magnesium</keyword>
<keyword id="KW-0479">Metal-binding</keyword>
<keyword id="KW-0488">Methylation</keyword>
<keyword id="KW-0503">Monooxygenase</keyword>
<keyword id="KW-0560">Oxidoreductase</keyword>
<keyword id="KW-0601">Photorespiration</keyword>
<keyword id="KW-0602">Photosynthesis</keyword>
<keyword id="KW-0934">Plastid</keyword>
<gene>
    <name evidence="1" type="primary">rbcL</name>
</gene>
<sequence length="453" mass="50335">MSPQTETKAGVGFKAGVKEYKLTYYTPEYETKDTDILAAFRVTPQPGVPPEERGAAVAAESSTGTWTTVWTDGLTSLDRYKGRCYHIEPVPGEEDQFIAYVAYPLDLFEEGSVTNMFTSIVGNVFGFKALRALRLEDLRIPVAYVKTFQGPPHGIQVERDKLNKYGRPLLECTIKPKLGLSAKNYGRAVYECLRGGLDFTKDDENVNSQPFMRWRDRFLFCAEAIYKSQAETGEIKGHYLNATAGTCEEMIKRAVFARELGVPIVMHDYLTGGFTANTSLSHYCRDNGLLLHIHRAMHAVIDRQKNHGMHFRVLAKALRMSGGDHIHSGTVVGKLEGERDITLGFVDLLRDDYIEKDRSRGIYFTQDWVSLPGVLPVASRGIHVWHMPALTEIFGDDSVLQFGGGTLGHPWGNAPGAVANRVALEACVKARNEGRDLAAEGGEIIREACKWSP</sequence>
<protein>
    <recommendedName>
        <fullName evidence="1">Ribulose bisphosphate carboxylase large chain</fullName>
        <shortName evidence="1">RuBisCO large subunit</shortName>
        <ecNumber evidence="1">4.1.1.39</ecNumber>
    </recommendedName>
</protein>
<organism>
    <name type="scientific">Valantia muralis</name>
    <name type="common">Wall valantia</name>
    <dbReference type="NCBI Taxonomy" id="29804"/>
    <lineage>
        <taxon>Eukaryota</taxon>
        <taxon>Viridiplantae</taxon>
        <taxon>Streptophyta</taxon>
        <taxon>Embryophyta</taxon>
        <taxon>Tracheophyta</taxon>
        <taxon>Spermatophyta</taxon>
        <taxon>Magnoliopsida</taxon>
        <taxon>eudicotyledons</taxon>
        <taxon>Gunneridae</taxon>
        <taxon>Pentapetalae</taxon>
        <taxon>asterids</taxon>
        <taxon>lamiids</taxon>
        <taxon>Gentianales</taxon>
        <taxon>Rubiaceae</taxon>
        <taxon>Rubioideae</taxon>
        <taxon>Rubieae</taxon>
        <taxon>Valantia</taxon>
    </lineage>
</organism>